<keyword id="KW-0028">Amino-acid biosynthesis</keyword>
<keyword id="KW-0057">Aromatic amino acid biosynthesis</keyword>
<keyword id="KW-0274">FAD</keyword>
<keyword id="KW-0285">Flavoprotein</keyword>
<keyword id="KW-0288">FMN</keyword>
<keyword id="KW-0456">Lyase</keyword>
<keyword id="KW-0521">NADP</keyword>
<dbReference type="EC" id="4.2.3.5" evidence="1"/>
<dbReference type="EMBL" id="CP000548">
    <property type="protein sequence ID" value="ABO04534.1"/>
    <property type="status" value="ALT_INIT"/>
    <property type="molecule type" value="Genomic_DNA"/>
</dbReference>
<dbReference type="RefSeq" id="WP_004266572.1">
    <property type="nucleotide sequence ID" value="NZ_CP007802.1"/>
</dbReference>
<dbReference type="SMR" id="A3MJ92"/>
<dbReference type="GeneID" id="92978703"/>
<dbReference type="KEGG" id="bmaz:BM44_2303"/>
<dbReference type="KEGG" id="bmn:BMA10247_0762"/>
<dbReference type="PATRIC" id="fig|320389.8.peg.2584"/>
<dbReference type="UniPathway" id="UPA00053">
    <property type="reaction ID" value="UER00090"/>
</dbReference>
<dbReference type="GO" id="GO:0005829">
    <property type="term" value="C:cytosol"/>
    <property type="evidence" value="ECO:0007669"/>
    <property type="project" value="TreeGrafter"/>
</dbReference>
<dbReference type="GO" id="GO:0004107">
    <property type="term" value="F:chorismate synthase activity"/>
    <property type="evidence" value="ECO:0007669"/>
    <property type="project" value="UniProtKB-UniRule"/>
</dbReference>
<dbReference type="GO" id="GO:0010181">
    <property type="term" value="F:FMN binding"/>
    <property type="evidence" value="ECO:0007669"/>
    <property type="project" value="TreeGrafter"/>
</dbReference>
<dbReference type="GO" id="GO:0008652">
    <property type="term" value="P:amino acid biosynthetic process"/>
    <property type="evidence" value="ECO:0007669"/>
    <property type="project" value="UniProtKB-KW"/>
</dbReference>
<dbReference type="GO" id="GO:0009073">
    <property type="term" value="P:aromatic amino acid family biosynthetic process"/>
    <property type="evidence" value="ECO:0007669"/>
    <property type="project" value="UniProtKB-KW"/>
</dbReference>
<dbReference type="GO" id="GO:0009423">
    <property type="term" value="P:chorismate biosynthetic process"/>
    <property type="evidence" value="ECO:0007669"/>
    <property type="project" value="UniProtKB-UniRule"/>
</dbReference>
<dbReference type="CDD" id="cd07304">
    <property type="entry name" value="Chorismate_synthase"/>
    <property type="match status" value="1"/>
</dbReference>
<dbReference type="FunFam" id="3.60.150.10:FF:000001">
    <property type="entry name" value="Chorismate synthase"/>
    <property type="match status" value="1"/>
</dbReference>
<dbReference type="Gene3D" id="3.60.150.10">
    <property type="entry name" value="Chorismate synthase AroC"/>
    <property type="match status" value="1"/>
</dbReference>
<dbReference type="HAMAP" id="MF_00300">
    <property type="entry name" value="Chorismate_synth"/>
    <property type="match status" value="1"/>
</dbReference>
<dbReference type="InterPro" id="IPR000453">
    <property type="entry name" value="Chorismate_synth"/>
</dbReference>
<dbReference type="InterPro" id="IPR035904">
    <property type="entry name" value="Chorismate_synth_AroC_sf"/>
</dbReference>
<dbReference type="InterPro" id="IPR020541">
    <property type="entry name" value="Chorismate_synthase_CS"/>
</dbReference>
<dbReference type="NCBIfam" id="TIGR00033">
    <property type="entry name" value="aroC"/>
    <property type="match status" value="1"/>
</dbReference>
<dbReference type="NCBIfam" id="NF003793">
    <property type="entry name" value="PRK05382.1"/>
    <property type="match status" value="1"/>
</dbReference>
<dbReference type="PANTHER" id="PTHR21085">
    <property type="entry name" value="CHORISMATE SYNTHASE"/>
    <property type="match status" value="1"/>
</dbReference>
<dbReference type="PANTHER" id="PTHR21085:SF0">
    <property type="entry name" value="CHORISMATE SYNTHASE"/>
    <property type="match status" value="1"/>
</dbReference>
<dbReference type="Pfam" id="PF01264">
    <property type="entry name" value="Chorismate_synt"/>
    <property type="match status" value="1"/>
</dbReference>
<dbReference type="PIRSF" id="PIRSF001456">
    <property type="entry name" value="Chorismate_synth"/>
    <property type="match status" value="1"/>
</dbReference>
<dbReference type="SUPFAM" id="SSF103263">
    <property type="entry name" value="Chorismate synthase, AroC"/>
    <property type="match status" value="1"/>
</dbReference>
<dbReference type="PROSITE" id="PS00787">
    <property type="entry name" value="CHORISMATE_SYNTHASE_1"/>
    <property type="match status" value="1"/>
</dbReference>
<dbReference type="PROSITE" id="PS00788">
    <property type="entry name" value="CHORISMATE_SYNTHASE_2"/>
    <property type="match status" value="1"/>
</dbReference>
<dbReference type="PROSITE" id="PS00789">
    <property type="entry name" value="CHORISMATE_SYNTHASE_3"/>
    <property type="match status" value="1"/>
</dbReference>
<sequence length="369" mass="39318">MSGNTLGTLFTVTTFGESHGPAIGCVIDGCPPGMALTEADVQLELDRRKPGTSRHVTQRQEPDQVEILSGVFEGVTTGAPIALLIRNTDQRSKDYGNIAETFRPGHADYTYWQKYGVRDYRGGGRSSARLTAPVVGAGAIAKKWLRERFGVEVRGYMSALGEIEIPFVDWSHVRENPFFAPNADIVPQLEDYMDALRKDGDSIGARIDVVASGVPVGWGEPLFDRLDADIAHAMMGINAVKGVEIGAGFASVAQRGSVHGDELTPDGFVGNHAGGVLGGISTGQDITVSIAIKPTSSIRTPRRSITRAGEPAVVETFGRHDPCVGIRATPIAESMLALVLIDHALRHRAQCGDVSSATPRIAARAPDAQ</sequence>
<evidence type="ECO:0000255" key="1">
    <source>
        <dbReference type="HAMAP-Rule" id="MF_00300"/>
    </source>
</evidence>
<evidence type="ECO:0000305" key="2"/>
<reference key="1">
    <citation type="journal article" date="2010" name="Genome Biol. Evol.">
        <title>Continuing evolution of Burkholderia mallei through genome reduction and large-scale rearrangements.</title>
        <authorList>
            <person name="Losada L."/>
            <person name="Ronning C.M."/>
            <person name="DeShazer D."/>
            <person name="Woods D."/>
            <person name="Fedorova N."/>
            <person name="Kim H.S."/>
            <person name="Shabalina S.A."/>
            <person name="Pearson T.R."/>
            <person name="Brinkac L."/>
            <person name="Tan P."/>
            <person name="Nandi T."/>
            <person name="Crabtree J."/>
            <person name="Badger J."/>
            <person name="Beckstrom-Sternberg S."/>
            <person name="Saqib M."/>
            <person name="Schutzer S.E."/>
            <person name="Keim P."/>
            <person name="Nierman W.C."/>
        </authorList>
    </citation>
    <scope>NUCLEOTIDE SEQUENCE [LARGE SCALE GENOMIC DNA]</scope>
    <source>
        <strain>NCTC 10247</strain>
    </source>
</reference>
<proteinExistence type="inferred from homology"/>
<gene>
    <name evidence="1" type="primary">aroC</name>
    <name type="ordered locus">BMA10247_0762</name>
</gene>
<organism>
    <name type="scientific">Burkholderia mallei (strain NCTC 10247)</name>
    <dbReference type="NCBI Taxonomy" id="320389"/>
    <lineage>
        <taxon>Bacteria</taxon>
        <taxon>Pseudomonadati</taxon>
        <taxon>Pseudomonadota</taxon>
        <taxon>Betaproteobacteria</taxon>
        <taxon>Burkholderiales</taxon>
        <taxon>Burkholderiaceae</taxon>
        <taxon>Burkholderia</taxon>
        <taxon>pseudomallei group</taxon>
    </lineage>
</organism>
<protein>
    <recommendedName>
        <fullName evidence="1">Chorismate synthase</fullName>
        <shortName evidence="1">CS</shortName>
        <ecNumber evidence="1">4.2.3.5</ecNumber>
    </recommendedName>
    <alternativeName>
        <fullName evidence="1">5-enolpyruvylshikimate-3-phosphate phospholyase</fullName>
    </alternativeName>
</protein>
<feature type="chain" id="PRO_0000322393" description="Chorismate synthase">
    <location>
        <begin position="1"/>
        <end position="369"/>
    </location>
</feature>
<feature type="binding site" evidence="1">
    <location>
        <position position="48"/>
    </location>
    <ligand>
        <name>NADP(+)</name>
        <dbReference type="ChEBI" id="CHEBI:58349"/>
    </ligand>
</feature>
<feature type="binding site" evidence="1">
    <location>
        <position position="54"/>
    </location>
    <ligand>
        <name>NADP(+)</name>
        <dbReference type="ChEBI" id="CHEBI:58349"/>
    </ligand>
</feature>
<feature type="binding site" evidence="1">
    <location>
        <begin position="125"/>
        <end position="127"/>
    </location>
    <ligand>
        <name>FMN</name>
        <dbReference type="ChEBI" id="CHEBI:58210"/>
    </ligand>
</feature>
<feature type="binding site" evidence="1">
    <location>
        <begin position="238"/>
        <end position="239"/>
    </location>
    <ligand>
        <name>FMN</name>
        <dbReference type="ChEBI" id="CHEBI:58210"/>
    </ligand>
</feature>
<feature type="binding site" evidence="1">
    <location>
        <position position="278"/>
    </location>
    <ligand>
        <name>FMN</name>
        <dbReference type="ChEBI" id="CHEBI:58210"/>
    </ligand>
</feature>
<feature type="binding site" evidence="1">
    <location>
        <begin position="293"/>
        <end position="297"/>
    </location>
    <ligand>
        <name>FMN</name>
        <dbReference type="ChEBI" id="CHEBI:58210"/>
    </ligand>
</feature>
<feature type="binding site" evidence="1">
    <location>
        <position position="319"/>
    </location>
    <ligand>
        <name>FMN</name>
        <dbReference type="ChEBI" id="CHEBI:58210"/>
    </ligand>
</feature>
<name>AROC_BURM7</name>
<comment type="function">
    <text evidence="1">Catalyzes the anti-1,4-elimination of the C-3 phosphate and the C-6 proR hydrogen from 5-enolpyruvylshikimate-3-phosphate (EPSP) to yield chorismate, which is the branch point compound that serves as the starting substrate for the three terminal pathways of aromatic amino acid biosynthesis. This reaction introduces a second double bond into the aromatic ring system.</text>
</comment>
<comment type="catalytic activity">
    <reaction evidence="1">
        <text>5-O-(1-carboxyvinyl)-3-phosphoshikimate = chorismate + phosphate</text>
        <dbReference type="Rhea" id="RHEA:21020"/>
        <dbReference type="ChEBI" id="CHEBI:29748"/>
        <dbReference type="ChEBI" id="CHEBI:43474"/>
        <dbReference type="ChEBI" id="CHEBI:57701"/>
        <dbReference type="EC" id="4.2.3.5"/>
    </reaction>
</comment>
<comment type="cofactor">
    <cofactor evidence="1">
        <name>FMNH2</name>
        <dbReference type="ChEBI" id="CHEBI:57618"/>
    </cofactor>
    <text evidence="1">Reduced FMN (FMNH(2)).</text>
</comment>
<comment type="pathway">
    <text evidence="1">Metabolic intermediate biosynthesis; chorismate biosynthesis; chorismate from D-erythrose 4-phosphate and phosphoenolpyruvate: step 7/7.</text>
</comment>
<comment type="subunit">
    <text evidence="1">Homotetramer.</text>
</comment>
<comment type="similarity">
    <text evidence="1">Belongs to the chorismate synthase family.</text>
</comment>
<comment type="sequence caution" evidence="2">
    <conflict type="erroneous initiation">
        <sequence resource="EMBL-CDS" id="ABO04534"/>
    </conflict>
    <text>Extended N-terminus.</text>
</comment>
<accession>A3MJ92</accession>